<evidence type="ECO:0000255" key="1">
    <source>
        <dbReference type="HAMAP-Rule" id="MF_00226"/>
    </source>
</evidence>
<evidence type="ECO:0000305" key="2"/>
<protein>
    <recommendedName>
        <fullName evidence="1">CinA-like protein</fullName>
    </recommendedName>
</protein>
<gene>
    <name evidence="1" type="primary">cinA</name>
    <name type="ordered locus">MT1952</name>
</gene>
<keyword id="KW-1185">Reference proteome</keyword>
<sequence length="430" mass="45512">MAVSARAGIVITGTEVLTGRVQDRNGPWIADRLLELGVELAHITICGDRPADIEAQLRFMAEQGVDLIVTSGGLGPTADDMTVEVVARYCGRELVLDDELENRIANILKKLMGRNPAIEPANFDSIRAANRKQAMIPAGSQVIDPVGTAPGLVVPGRPAVMVLPGPPRELQPIWSKAIQTAPVQDAIAGRTTYRQETIRIFGLPESSLADTLRDAEAAIPGFDLVEITTCLRRGEIEMVTRFEPNAAQVYTQLARLLRDRHGHQVYSEDGASVDELVAKLLTGRRIATAESCTAGLLAARLTDRPGSSKYVAGAVVAYSNEAKAQLLGVDPALIEAHGAVSEPVAQAMAAGALQGFGADTATAITGIAGPSGGTPEKPVGTVCFTVLLDDGRTTTRTVRLPGNRSDIRERSTTVAMHLLRRTLSGIPGSP</sequence>
<proteinExistence type="inferred from homology"/>
<reference key="1">
    <citation type="journal article" date="2002" name="J. Bacteriol.">
        <title>Whole-genome comparison of Mycobacterium tuberculosis clinical and laboratory strains.</title>
        <authorList>
            <person name="Fleischmann R.D."/>
            <person name="Alland D."/>
            <person name="Eisen J.A."/>
            <person name="Carpenter L."/>
            <person name="White O."/>
            <person name="Peterson J.D."/>
            <person name="DeBoy R.T."/>
            <person name="Dodson R.J."/>
            <person name="Gwinn M.L."/>
            <person name="Haft D.H."/>
            <person name="Hickey E.K."/>
            <person name="Kolonay J.F."/>
            <person name="Nelson W.C."/>
            <person name="Umayam L.A."/>
            <person name="Ermolaeva M.D."/>
            <person name="Salzberg S.L."/>
            <person name="Delcher A."/>
            <person name="Utterback T.R."/>
            <person name="Weidman J.F."/>
            <person name="Khouri H.M."/>
            <person name="Gill J."/>
            <person name="Mikula A."/>
            <person name="Bishai W."/>
            <person name="Jacobs W.R. Jr."/>
            <person name="Venter J.C."/>
            <person name="Fraser C.M."/>
        </authorList>
    </citation>
    <scope>NUCLEOTIDE SEQUENCE [LARGE SCALE GENOMIC DNA]</scope>
    <source>
        <strain>CDC 1551 / Oshkosh</strain>
    </source>
</reference>
<comment type="similarity">
    <text evidence="1">Belongs to the CinA family.</text>
</comment>
<comment type="sequence caution" evidence="2">
    <conflict type="erroneous initiation">
        <sequence resource="EMBL-CDS" id="AAK46223"/>
    </conflict>
</comment>
<organism>
    <name type="scientific">Mycobacterium tuberculosis (strain CDC 1551 / Oshkosh)</name>
    <dbReference type="NCBI Taxonomy" id="83331"/>
    <lineage>
        <taxon>Bacteria</taxon>
        <taxon>Bacillati</taxon>
        <taxon>Actinomycetota</taxon>
        <taxon>Actinomycetes</taxon>
        <taxon>Mycobacteriales</taxon>
        <taxon>Mycobacteriaceae</taxon>
        <taxon>Mycobacterium</taxon>
        <taxon>Mycobacterium tuberculosis complex</taxon>
    </lineage>
</organism>
<name>CINAL_MYCTO</name>
<accession>P9WPE2</accession>
<accession>L0T877</accession>
<accession>O07731</accession>
<accession>P63775</accession>
<feature type="chain" id="PRO_0000426967" description="CinA-like protein">
    <location>
        <begin position="1"/>
        <end position="430"/>
    </location>
</feature>
<dbReference type="EMBL" id="AE000516">
    <property type="protein sequence ID" value="AAK46223.1"/>
    <property type="status" value="ALT_INIT"/>
    <property type="molecule type" value="Genomic_DNA"/>
</dbReference>
<dbReference type="PIR" id="B70518">
    <property type="entry name" value="B70518"/>
</dbReference>
<dbReference type="RefSeq" id="WP_003900426.1">
    <property type="nucleotide sequence ID" value="NZ_KK341227.1"/>
</dbReference>
<dbReference type="SMR" id="P9WPE2"/>
<dbReference type="KEGG" id="mtc:MT1952"/>
<dbReference type="PATRIC" id="fig|83331.31.peg.2101"/>
<dbReference type="HOGENOM" id="CLU_030805_9_2_11"/>
<dbReference type="Proteomes" id="UP000001020">
    <property type="component" value="Chromosome"/>
</dbReference>
<dbReference type="CDD" id="cd00885">
    <property type="entry name" value="cinA"/>
    <property type="match status" value="1"/>
</dbReference>
<dbReference type="FunFam" id="3.40.980.10:FF:000018">
    <property type="entry name" value="CinA-like protein"/>
    <property type="match status" value="1"/>
</dbReference>
<dbReference type="Gene3D" id="3.90.950.20">
    <property type="entry name" value="CinA-like"/>
    <property type="match status" value="1"/>
</dbReference>
<dbReference type="Gene3D" id="3.40.980.10">
    <property type="entry name" value="MoaB/Mog-like domain"/>
    <property type="match status" value="1"/>
</dbReference>
<dbReference type="HAMAP" id="MF_00226_B">
    <property type="entry name" value="CinA_B"/>
    <property type="match status" value="1"/>
</dbReference>
<dbReference type="InterPro" id="IPR050101">
    <property type="entry name" value="CinA"/>
</dbReference>
<dbReference type="InterPro" id="IPR036653">
    <property type="entry name" value="CinA-like_C"/>
</dbReference>
<dbReference type="InterPro" id="IPR008136">
    <property type="entry name" value="CinA_C"/>
</dbReference>
<dbReference type="InterPro" id="IPR008135">
    <property type="entry name" value="Competence-induced_CinA"/>
</dbReference>
<dbReference type="InterPro" id="IPR036425">
    <property type="entry name" value="MoaB/Mog-like_dom_sf"/>
</dbReference>
<dbReference type="InterPro" id="IPR001453">
    <property type="entry name" value="MoaB/Mog_dom"/>
</dbReference>
<dbReference type="NCBIfam" id="TIGR00200">
    <property type="entry name" value="cinA_nterm"/>
    <property type="match status" value="1"/>
</dbReference>
<dbReference type="NCBIfam" id="TIGR00199">
    <property type="entry name" value="PncC_domain"/>
    <property type="match status" value="1"/>
</dbReference>
<dbReference type="NCBIfam" id="NF001813">
    <property type="entry name" value="PRK00549.1"/>
    <property type="match status" value="1"/>
</dbReference>
<dbReference type="PANTHER" id="PTHR13939">
    <property type="entry name" value="NICOTINAMIDE-NUCLEOTIDE AMIDOHYDROLASE PNCC"/>
    <property type="match status" value="1"/>
</dbReference>
<dbReference type="PANTHER" id="PTHR13939:SF0">
    <property type="entry name" value="NMN AMIDOHYDROLASE-LIKE PROTEIN YFAY"/>
    <property type="match status" value="1"/>
</dbReference>
<dbReference type="Pfam" id="PF02464">
    <property type="entry name" value="CinA"/>
    <property type="match status" value="1"/>
</dbReference>
<dbReference type="Pfam" id="PF00994">
    <property type="entry name" value="MoCF_biosynth"/>
    <property type="match status" value="1"/>
</dbReference>
<dbReference type="PIRSF" id="PIRSF006728">
    <property type="entry name" value="CinA"/>
    <property type="match status" value="1"/>
</dbReference>
<dbReference type="SMART" id="SM00852">
    <property type="entry name" value="MoCF_biosynth"/>
    <property type="match status" value="1"/>
</dbReference>
<dbReference type="SUPFAM" id="SSF142433">
    <property type="entry name" value="CinA-like"/>
    <property type="match status" value="1"/>
</dbReference>
<dbReference type="SUPFAM" id="SSF53218">
    <property type="entry name" value="Molybdenum cofactor biosynthesis proteins"/>
    <property type="match status" value="1"/>
</dbReference>